<protein>
    <recommendedName>
        <fullName>Histone H3.3</fullName>
    </recommendedName>
</protein>
<organism>
    <name type="scientific">Oryza coarctata</name>
    <name type="common">Wild rice</name>
    <name type="synonym">Porteresia coarctata</name>
    <dbReference type="NCBI Taxonomy" id="77588"/>
    <lineage>
        <taxon>Eukaryota</taxon>
        <taxon>Viridiplantae</taxon>
        <taxon>Streptophyta</taxon>
        <taxon>Embryophyta</taxon>
        <taxon>Tracheophyta</taxon>
        <taxon>Spermatophyta</taxon>
        <taxon>Magnoliopsida</taxon>
        <taxon>Liliopsida</taxon>
        <taxon>Poales</taxon>
        <taxon>Poaceae</taxon>
        <taxon>BOP clade</taxon>
        <taxon>Oryzoideae</taxon>
        <taxon>Oryzeae</taxon>
        <taxon>Oryzinae</taxon>
        <taxon>Oryza</taxon>
    </lineage>
</organism>
<dbReference type="EMBL" id="AF109910">
    <property type="protein sequence ID" value="AAC97380.1"/>
    <property type="molecule type" value="mRNA"/>
</dbReference>
<dbReference type="SMR" id="Q71U98"/>
<dbReference type="GO" id="GO:0000786">
    <property type="term" value="C:nucleosome"/>
    <property type="evidence" value="ECO:0007669"/>
    <property type="project" value="UniProtKB-KW"/>
</dbReference>
<dbReference type="GO" id="GO:0005634">
    <property type="term" value="C:nucleus"/>
    <property type="evidence" value="ECO:0007669"/>
    <property type="project" value="UniProtKB-SubCell"/>
</dbReference>
<dbReference type="GO" id="GO:0003677">
    <property type="term" value="F:DNA binding"/>
    <property type="evidence" value="ECO:0007669"/>
    <property type="project" value="UniProtKB-KW"/>
</dbReference>
<dbReference type="GO" id="GO:0046982">
    <property type="term" value="F:protein heterodimerization activity"/>
    <property type="evidence" value="ECO:0007669"/>
    <property type="project" value="InterPro"/>
</dbReference>
<dbReference type="GO" id="GO:0030527">
    <property type="term" value="F:structural constituent of chromatin"/>
    <property type="evidence" value="ECO:0007669"/>
    <property type="project" value="InterPro"/>
</dbReference>
<dbReference type="CDD" id="cd22911">
    <property type="entry name" value="HFD_H3"/>
    <property type="match status" value="1"/>
</dbReference>
<dbReference type="FunFam" id="1.10.20.10:FF:000078">
    <property type="entry name" value="Histone H3"/>
    <property type="match status" value="1"/>
</dbReference>
<dbReference type="FunFam" id="1.10.20.10:FF:000044">
    <property type="entry name" value="Histone H3.3"/>
    <property type="match status" value="1"/>
</dbReference>
<dbReference type="Gene3D" id="1.10.20.10">
    <property type="entry name" value="Histone, subunit A"/>
    <property type="match status" value="1"/>
</dbReference>
<dbReference type="InterPro" id="IPR009072">
    <property type="entry name" value="Histone-fold"/>
</dbReference>
<dbReference type="InterPro" id="IPR007125">
    <property type="entry name" value="Histone_H2A/H2B/H3"/>
</dbReference>
<dbReference type="InterPro" id="IPR000164">
    <property type="entry name" value="Histone_H3/CENP-A"/>
</dbReference>
<dbReference type="PANTHER" id="PTHR11426">
    <property type="entry name" value="HISTONE H3"/>
    <property type="match status" value="1"/>
</dbReference>
<dbReference type="Pfam" id="PF00125">
    <property type="entry name" value="Histone"/>
    <property type="match status" value="1"/>
</dbReference>
<dbReference type="PRINTS" id="PR00622">
    <property type="entry name" value="HISTONEH3"/>
</dbReference>
<dbReference type="SMART" id="SM00428">
    <property type="entry name" value="H3"/>
    <property type="match status" value="1"/>
</dbReference>
<dbReference type="SUPFAM" id="SSF47113">
    <property type="entry name" value="Histone-fold"/>
    <property type="match status" value="1"/>
</dbReference>
<dbReference type="PROSITE" id="PS00322">
    <property type="entry name" value="HISTONE_H3_1"/>
    <property type="match status" value="1"/>
</dbReference>
<dbReference type="PROSITE" id="PS00959">
    <property type="entry name" value="HISTONE_H3_2"/>
    <property type="match status" value="1"/>
</dbReference>
<keyword id="KW-0007">Acetylation</keyword>
<keyword id="KW-0158">Chromosome</keyword>
<keyword id="KW-0238">DNA-binding</keyword>
<keyword id="KW-0488">Methylation</keyword>
<keyword id="KW-0544">Nucleosome core</keyword>
<keyword id="KW-0539">Nucleus</keyword>
<keyword id="KW-0597">Phosphoprotein</keyword>
<evidence type="ECO:0000250" key="1"/>
<evidence type="ECO:0000256" key="2">
    <source>
        <dbReference type="SAM" id="MobiDB-lite"/>
    </source>
</evidence>
<evidence type="ECO:0000305" key="3"/>
<reference key="1">
    <citation type="online journal article" date="1999" name="Plant Gene Register">
        <title>Histone H3 gene from Porteresia coarctata.</title>
        <authorList>
            <person name="Senthilkumar P."/>
            <person name="Parani M."/>
            <person name="Lakshmi M."/>
            <person name="Jithesh M.N."/>
            <person name="Parida A."/>
        </authorList>
        <locator>PGR99-023</locator>
    </citation>
    <scope>NUCLEOTIDE SEQUENCE [MRNA]</scope>
</reference>
<proteinExistence type="evidence at transcript level"/>
<sequence length="136" mass="15406">MARTKQTARKSTGGKAPRKQLATKAARKSAPTTGGVKKPHRYRPGTVALREIRKYQKSTELLIRKLPFQRLVREIAQDFKTDLRFQSHAVLALQEAAEAYLVGLFEDTNLCAIHAKRVTIMPKDIQLARRIRGERA</sequence>
<accession>Q71U98</accession>
<name>H33_ORYCO</name>
<feature type="initiator methionine" description="Removed" evidence="1">
    <location>
        <position position="1"/>
    </location>
</feature>
<feature type="chain" id="PRO_0000221288" description="Histone H3.3">
    <location>
        <begin position="2"/>
        <end position="136"/>
    </location>
</feature>
<feature type="region of interest" description="Disordered" evidence="2">
    <location>
        <begin position="1"/>
        <end position="43"/>
    </location>
</feature>
<feature type="modified residue" description="N6-methylated lysine" evidence="1">
    <location>
        <position position="5"/>
    </location>
</feature>
<feature type="modified residue" description="N6-acetyllysine; alternate" evidence="1">
    <location>
        <position position="10"/>
    </location>
</feature>
<feature type="modified residue" description="N6-methylated lysine; alternate" evidence="1">
    <location>
        <position position="10"/>
    </location>
</feature>
<feature type="modified residue" description="Phosphoserine" evidence="1">
    <location>
        <position position="11"/>
    </location>
</feature>
<feature type="modified residue" description="Phosphothreonine" evidence="1">
    <location>
        <position position="12"/>
    </location>
</feature>
<feature type="modified residue" description="N6-acetyllysine" evidence="1">
    <location>
        <position position="15"/>
    </location>
</feature>
<feature type="modified residue" description="N6-acetyllysine; alternate" evidence="1">
    <location>
        <position position="19"/>
    </location>
</feature>
<feature type="modified residue" description="N6-methylated lysine; alternate" evidence="1">
    <location>
        <position position="19"/>
    </location>
</feature>
<feature type="modified residue" description="N6-acetyllysine; alternate" evidence="1">
    <location>
        <position position="24"/>
    </location>
</feature>
<feature type="modified residue" description="N6-methylated lysine; alternate" evidence="1">
    <location>
        <position position="24"/>
    </location>
</feature>
<feature type="modified residue" description="N6-methylated lysine" evidence="1">
    <location>
        <position position="28"/>
    </location>
</feature>
<feature type="modified residue" description="Phosphoserine" evidence="1">
    <location>
        <position position="29"/>
    </location>
</feature>
<feature type="modified residue" description="N6-methylated lysine" evidence="1">
    <location>
        <position position="37"/>
    </location>
</feature>
<comment type="function">
    <text>Variant histone H3 which replaces conventional H3 in a wide range of nucleosomes in active genes. Constitutes the predominant form of histone H3 in non-dividing cells and is incorporated into chromatin independently of DNA synthesis. Deposited at sites of nucleosomal displacement throughout transcribed genes, suggesting that it represents an epigenetic imprint of transcriptionally active chromatin. Nucleosomes wrap and compact DNA into chromatin, limiting DNA accessibility to the cellular machineries which require DNA as a template. Histones thereby play a central role in transcription regulation, DNA repair, DNA replication and chromosomal stability. DNA accessibility is regulated via a complex set of post-translational modifications of histones, also called histone code, and nucleosome remodeling.</text>
</comment>
<comment type="subunit">
    <text>The nucleosome is a histone octamer containing two molecules each of H2A, H2B, H3 and H4 assembled in one H3-H4 heterotetramer and two H2A-H2B heterodimers. The octamer wraps approximately 147 bp of DNA.</text>
</comment>
<comment type="subcellular location">
    <subcellularLocation>
        <location evidence="1">Nucleus</location>
    </subcellularLocation>
    <subcellularLocation>
        <location evidence="1">Chromosome</location>
    </subcellularLocation>
</comment>
<comment type="PTM">
    <text evidence="1">Acetylation is generally linked to gene activation. Can be acetylated to form H3K9ac, H3K14ac, H3K18ac and H3K23ac. H3K9ac could compete with H3K9me and prevent gene silencing. H3K9ac is restricted to euchromatin (By similarity).</text>
</comment>
<comment type="PTM">
    <text evidence="1">Methylated to form mainly H3K4me, H3K9me, H3K18me, H3K23me, H3K27me and H3K36me. H3K4me1/2/3, H3K9me3, H3K27me3 and H3K36me1/2/3 are typical marks for euchromatin, whereas heterochromatic chromocenters are enriched in H3K9me1/2 and H3K27me1/2. H2BK143ub1 is probably prerequisite for H3K4me (By similarity).</text>
</comment>
<comment type="PTM">
    <text evidence="1">Can be phosphorylated to form H3S10ph, H3T11ph and H3S28ph.</text>
</comment>
<comment type="similarity">
    <text evidence="3">Belongs to the histone H3 family.</text>
</comment>
<comment type="caution">
    <text evidence="3">To ensure consistency between histone entries, we follow the 'Brno' nomenclature for histone modifications, with positions referring to those used in the literature for the 'closest' model organism. Due to slight variations in histone sequences between organisms and to the presence of initiator methionine in UniProtKB/Swiss-Prot sequences, the actual positions of modified amino acids in the sequence generally differ. In this entry the following conventions are used: H3K4me = methylated Lys-5; H3K9ac = acetylated Lys-10; H3K9me = methylated Lys-10; H3S10ph = phosphorylated Ser-11; H3T11ph = phosphorylated Thr-12; H3K14ac = acetylated Lys-15; H3K18ac = acetylated Lys-19; H3K18me = methylated Lys-19; H3K23ac = acetylated Lys-24; H3K23me = methylated Lys-24; H3K27me = methylated Lys-28; H3S28ph = phosphorylated Ser-29; H3K36me = methylated Lys-37.</text>
</comment>